<keyword id="KW-0002">3D-structure</keyword>
<keyword id="KW-0025">Alternative splicing</keyword>
<keyword id="KW-0963">Cytoplasm</keyword>
<keyword id="KW-0221">Differentiation</keyword>
<keyword id="KW-0225">Disease variant</keyword>
<keyword id="KW-0238">DNA-binding</keyword>
<keyword id="KW-0242">Dwarfism</keyword>
<keyword id="KW-1017">Isopeptide bond</keyword>
<keyword id="KW-0488">Methylation</keyword>
<keyword id="KW-0539">Nucleus</keyword>
<keyword id="KW-0597">Phosphoprotein</keyword>
<keyword id="KW-1267">Proteomics identification</keyword>
<keyword id="KW-1185">Reference proteome</keyword>
<keyword id="KW-0804">Transcription</keyword>
<keyword id="KW-0805">Transcription regulation</keyword>
<keyword id="KW-0832">Ubl conjugation</keyword>
<organism>
    <name type="scientific">Homo sapiens</name>
    <name type="common">Human</name>
    <dbReference type="NCBI Taxonomy" id="9606"/>
    <lineage>
        <taxon>Eukaryota</taxon>
        <taxon>Metazoa</taxon>
        <taxon>Chordata</taxon>
        <taxon>Craniata</taxon>
        <taxon>Vertebrata</taxon>
        <taxon>Euteleostomi</taxon>
        <taxon>Mammalia</taxon>
        <taxon>Eutheria</taxon>
        <taxon>Euarchontoglires</taxon>
        <taxon>Primates</taxon>
        <taxon>Haplorrhini</taxon>
        <taxon>Catarrhini</taxon>
        <taxon>Hominidae</taxon>
        <taxon>Homo</taxon>
    </lineage>
</organism>
<protein>
    <recommendedName>
        <fullName>Runt-related transcription factor 2</fullName>
    </recommendedName>
    <alternativeName>
        <fullName>Acute myeloid leukemia 3 protein</fullName>
    </alternativeName>
    <alternativeName>
        <fullName>Core-binding factor subunit alpha-1</fullName>
        <shortName>CBF-alpha-1</shortName>
    </alternativeName>
    <alternativeName>
        <fullName>Oncogene AML-3</fullName>
    </alternativeName>
    <alternativeName>
        <fullName>Osteoblast-specific transcription factor 2</fullName>
        <shortName>OSF-2</shortName>
    </alternativeName>
    <alternativeName>
        <fullName>Polyomavirus enhancer-binding protein 2 alpha A subunit</fullName>
        <shortName>PEA2-alpha A</shortName>
        <shortName>PEBP2-alpha A</shortName>
    </alternativeName>
    <alternativeName>
        <fullName>SL3-3 enhancer factor 1 alpha A subunit</fullName>
    </alternativeName>
    <alternativeName>
        <fullName>SL3/AKV core-binding factor alpha A subunit</fullName>
    </alternativeName>
</protein>
<name>RUNX2_HUMAN</name>
<feature type="chain" id="PRO_0000174659" description="Runt-related transcription factor 2">
    <location>
        <begin position="1"/>
        <end position="521"/>
    </location>
</feature>
<feature type="domain" description="Runt" evidence="4">
    <location>
        <begin position="101"/>
        <end position="229"/>
    </location>
</feature>
<feature type="region of interest" description="Disordered" evidence="5">
    <location>
        <begin position="18"/>
        <end position="59"/>
    </location>
</feature>
<feature type="region of interest" description="Disordered" evidence="5">
    <location>
        <begin position="222"/>
        <end position="340"/>
    </location>
</feature>
<feature type="region of interest" description="Required for interaction with FOXO1" evidence="1">
    <location>
        <begin position="242"/>
        <end position="258"/>
    </location>
</feature>
<feature type="region of interest" description="Interaction with KAT6A" evidence="1">
    <location>
        <begin position="336"/>
        <end position="439"/>
    </location>
</feature>
<feature type="region of interest" description="Interaction with KAT6B" evidence="11">
    <location>
        <begin position="374"/>
        <end position="468"/>
    </location>
</feature>
<feature type="region of interest" description="Disordered" evidence="5">
    <location>
        <begin position="460"/>
        <end position="521"/>
    </location>
</feature>
<feature type="compositionally biased region" description="Low complexity" evidence="5">
    <location>
        <begin position="21"/>
        <end position="33"/>
    </location>
</feature>
<feature type="compositionally biased region" description="Low complexity" evidence="5">
    <location>
        <begin position="47"/>
        <end position="59"/>
    </location>
</feature>
<feature type="compositionally biased region" description="Polar residues" evidence="5">
    <location>
        <begin position="267"/>
        <end position="326"/>
    </location>
</feature>
<feature type="compositionally biased region" description="Polar residues" evidence="5">
    <location>
        <begin position="473"/>
        <end position="492"/>
    </location>
</feature>
<feature type="compositionally biased region" description="Polar residues" evidence="5">
    <location>
        <begin position="499"/>
        <end position="511"/>
    </location>
</feature>
<feature type="compositionally biased region" description="Basic and acidic residues" evidence="5">
    <location>
        <begin position="512"/>
        <end position="521"/>
    </location>
</feature>
<feature type="modified residue" description="Asymmetric dimethylarginine" evidence="2">
    <location>
        <position position="267"/>
    </location>
</feature>
<feature type="modified residue" description="Phosphoserine; by CDK1" evidence="17">
    <location>
        <position position="451"/>
    </location>
</feature>
<feature type="cross-link" description="Glycyl lysine isopeptide (Lys-Gly) (interchain with G-Cter in SUMO2)" evidence="32">
    <location>
        <position position="238"/>
    </location>
</feature>
<feature type="splice variant" id="VSP_005937" description="In isoform 2." evidence="30">
    <original>MASNSLFSTVTPCQQNFFW</original>
    <variation>MRIPV</variation>
    <location>
        <begin position="1"/>
        <end position="19"/>
    </location>
</feature>
<feature type="splice variant" id="VSP_005938" description="In isoform 3." evidence="29">
    <location>
        <begin position="341"/>
        <end position="362"/>
    </location>
</feature>
<feature type="sequence variant" id="VAR_064081" description="In CLCD1." evidence="12">
    <original>Q</original>
    <variation>L</variation>
    <location>
        <position position="53"/>
    </location>
</feature>
<feature type="sequence variant" id="VAR_079576" description="In CLCD1; decreased subcellular localization in the nucleus; decreased transactivation activity." evidence="26">
    <location>
        <begin position="67"/>
        <end position="521"/>
    </location>
</feature>
<feature type="sequence variant" id="VAR_012131" evidence="27">
    <location>
        <begin position="78"/>
        <end position="83"/>
    </location>
</feature>
<feature type="sequence variant" id="VAR_012130" description="In CLCD1; the patient also shows brachydactyly of hands and feet." evidence="27">
    <original>A</original>
    <variation>AAAAAAAAAAA</variation>
    <location>
        <position position="84"/>
    </location>
</feature>
<feature type="sequence variant" id="VAR_012132" description="In CLCD1; unchanged subcellular localization; decreased transactivation activity." evidence="6 26">
    <original>L</original>
    <variation>R</variation>
    <location>
        <position position="113"/>
    </location>
</feature>
<feature type="sequence variant" id="VAR_064082" description="In CLCD1." evidence="21">
    <original>S</original>
    <variation>N</variation>
    <location>
        <position position="118"/>
    </location>
</feature>
<feature type="sequence variant" id="VAR_012133" description="In CLCD1." evidence="6">
    <original>S</original>
    <variation>R</variation>
    <location>
        <position position="118"/>
    </location>
</feature>
<feature type="sequence variant" id="VAR_012134" description="In CLCD1." evidence="6">
    <original>F</original>
    <variation>C</variation>
    <location>
        <position position="121"/>
    </location>
</feature>
<feature type="sequence variant" id="VAR_012135" description="In CLCD1." evidence="6">
    <original>C</original>
    <variation>R</variation>
    <location>
        <position position="123"/>
    </location>
</feature>
<feature type="sequence variant" id="VAR_064083" description="In CLCD1." evidence="21 23">
    <original>R</original>
    <variation>C</variation>
    <location>
        <position position="131"/>
    </location>
</feature>
<feature type="sequence variant" id="VAR_064084" description="In CLCD1." evidence="16">
    <original>R</original>
    <variation>G</variation>
    <location>
        <position position="131"/>
    </location>
</feature>
<feature type="sequence variant" id="VAR_064085" description="In CLCD1." evidence="21">
    <original>R</original>
    <variation>S</variation>
    <location>
        <position position="131"/>
    </location>
</feature>
<feature type="sequence variant" id="VAR_012136" description="In CLCD1." evidence="7">
    <location>
        <position position="133"/>
    </location>
</feature>
<feature type="sequence variant" id="VAR_064086" description="In CLCD1." evidence="21">
    <original>L</original>
    <variation>P</variation>
    <location>
        <position position="136"/>
    </location>
</feature>
<feature type="sequence variant" id="VAR_064087" description="In CLCD1." evidence="21">
    <original>V</original>
    <variation>D</variation>
    <location>
        <position position="156"/>
    </location>
</feature>
<feature type="sequence variant" id="VAR_064088" description="In CLCD1." evidence="10">
    <original>V</original>
    <variation>G</variation>
    <location>
        <position position="156"/>
    </location>
</feature>
<feature type="sequence variant" id="VAR_064089" description="In CLCD1; dbSNP:rs104893995." evidence="10 15">
    <original>R</original>
    <variation>P</variation>
    <location>
        <position position="169"/>
    </location>
</feature>
<feature type="sequence variant" id="VAR_012137" description="In CLCD1; dbSNP:rs104893995." evidence="7">
    <original>R</original>
    <variation>Q</variation>
    <location>
        <position position="169"/>
    </location>
</feature>
<feature type="sequence variant" id="VAR_064090" description="In CLCD1." evidence="21">
    <original>M</original>
    <variation>K</variation>
    <location>
        <position position="175"/>
    </location>
</feature>
<feature type="sequence variant" id="VAR_012138" description="In CLCD1; abolishes DNA binding; dbSNP:rs104893989." evidence="7 25 28">
    <original>M</original>
    <variation>R</variation>
    <location>
        <position position="175"/>
    </location>
</feature>
<feature type="sequence variant" id="VAR_064091" description="In CLCD1; dbSNP:rs201647225." evidence="21">
    <original>M</original>
    <variation>V</variation>
    <location>
        <position position="175"/>
    </location>
</feature>
<feature type="sequence variant" id="VAR_079577" description="In CLCD1; unchanged subcellular localization; decreased transactivation activity." evidence="26">
    <original>R</original>
    <variation>T</variation>
    <location>
        <position position="186"/>
    </location>
</feature>
<feature type="sequence variant" id="VAR_064092" description="In CLCD1." evidence="21">
    <original>F</original>
    <variation>S</variation>
    <location>
        <position position="187"/>
    </location>
</feature>
<feature type="sequence variant" id="VAR_012139" description="In CLCD1; abolishes DNA binding; dbSNP:rs1057521068." evidence="7 25">
    <original>R</original>
    <variation>Q</variation>
    <location>
        <position position="190"/>
    </location>
</feature>
<feature type="sequence variant" id="VAR_012140" description="In CLCD1; has severely impaired DNA binding and transactivation." evidence="9 10 14">
    <original>R</original>
    <variation>W</variation>
    <location>
        <position position="190"/>
    </location>
</feature>
<feature type="sequence variant" id="VAR_012141" description="In CLCD1; abolishes DNA binding; dbSNP:rs104893990." evidence="7 28">
    <original>S</original>
    <variation>N</variation>
    <location>
        <position position="191"/>
    </location>
</feature>
<feature type="sequence variant" id="VAR_012142" description="In CLCD1." evidence="7">
    <original>R</original>
    <variation>C</variation>
    <location>
        <position position="193"/>
    </location>
</feature>
<feature type="sequence variant" id="VAR_079578" description="In CLCD1; unchanged subcellular localization; decreased transactivation activity." evidence="24">
    <original>R</original>
    <variation>G</variation>
    <location>
        <position position="193"/>
    </location>
</feature>
<feature type="sequence variant" id="VAR_064093" description="In CLCD1." evidence="21">
    <original>R</original>
    <variation>Q</variation>
    <location>
        <position position="193"/>
    </location>
</feature>
<feature type="sequence variant" id="VAR_012143" description="In CLCD1; retains heterodimerization activity together with a trace potential for DNA binding; retains a low but still substantial transactivation activity." evidence="8 14">
    <original>F</original>
    <variation>S</variation>
    <location>
        <position position="197"/>
    </location>
</feature>
<feature type="sequence variant" id="VAR_012144" description="In CLCD1; abolishes DNA binding." evidence="7">
    <original>L</original>
    <variation>F</variation>
    <location>
        <position position="199"/>
    </location>
</feature>
<feature type="sequence variant" id="VAR_012145" description="In CLCD1; mild; associated also with isolated dental anomalies; normal DNA binding; dbSNP:rs104893993." evidence="7">
    <original>T</original>
    <variation>A</variation>
    <location>
        <position position="200"/>
    </location>
</feature>
<feature type="sequence variant" id="VAR_064094" description="In CLCD1." evidence="21">
    <original>T</original>
    <variation>I</variation>
    <location>
        <position position="200"/>
    </location>
</feature>
<feature type="sequence variant" id="VAR_064095" description="In CLCD1." evidence="10">
    <original>I</original>
    <variation>K</variation>
    <location>
        <position position="201"/>
    </location>
</feature>
<feature type="sequence variant" id="VAR_012146" description="In CLCD1." evidence="6">
    <original>T</original>
    <variation>R</variation>
    <location>
        <position position="205"/>
    </location>
</feature>
<feature type="sequence variant" id="VAR_064096" description="In CLCD1." evidence="21">
    <original>Q</original>
    <variation>H</variation>
    <location>
        <position position="209"/>
    </location>
</feature>
<feature type="sequence variant" id="VAR_012147" description="In CLCD1." evidence="7">
    <original>Q</original>
    <variation>R</variation>
    <location>
        <position position="209"/>
    </location>
</feature>
<feature type="sequence variant" id="VAR_064097" description="In CLCD1." evidence="21">
    <original>A</original>
    <variation>P</variation>
    <location>
        <position position="211"/>
    </location>
</feature>
<feature type="sequence variant" id="VAR_064098" description="In CLCD1." evidence="21">
    <original>K</original>
    <variation>E</variation>
    <location>
        <position position="218"/>
    </location>
</feature>
<feature type="sequence variant" id="VAR_064099" description="In CLCD1; has severely impaired DNA binding and transactivation; dbSNP:rs752933596." evidence="14">
    <original>K</original>
    <variation>N</variation>
    <location>
        <position position="218"/>
    </location>
</feature>
<feature type="sequence variant" id="VAR_064100" description="In CLCD1." evidence="21">
    <original>K</original>
    <variation>Q</variation>
    <location>
        <position position="218"/>
    </location>
</feature>
<feature type="sequence variant" id="VAR_064101" description="In CLCD1; has severely impaired DNA binding and transactivation." evidence="14">
    <original>T</original>
    <variation>I</variation>
    <location>
        <position position="220"/>
    </location>
</feature>
<feature type="sequence variant" id="VAR_064102" description="In CLCD1." evidence="21">
    <original>R</original>
    <variation>L</variation>
    <location>
        <position position="225"/>
    </location>
</feature>
<feature type="sequence variant" id="VAR_012148" description="In CLCD1; interferes with nuclear localization; abolishes DNA binding; dbSNP:rs104893991." evidence="6 7 10 14 16 25">
    <original>R</original>
    <variation>Q</variation>
    <location>
        <position position="225"/>
    </location>
</feature>
<feature type="sequence variant" id="VAR_012149" description="In CLCD1; interferes with nuclear localization; has severely impaired DNA binding and transactivation; dbSNP:rs104893992." evidence="6 10 14 19 26">
    <original>R</original>
    <variation>W</variation>
    <location>
        <position position="225"/>
    </location>
</feature>
<feature type="sequence variant" id="VAR_064103" description="In CLCD1." evidence="21">
    <original>R</original>
    <variation>G</variation>
    <location>
        <position position="228"/>
    </location>
</feature>
<feature type="sequence variant" id="VAR_064104" description="In CLCD1." evidence="21">
    <original>K</original>
    <variation>R</variation>
    <location>
        <position position="233"/>
    </location>
</feature>
<feature type="sequence variant" id="VAR_064105" description="In CLCD1." evidence="21">
    <original>D</original>
    <variation>N</variation>
    <location>
        <position position="287"/>
    </location>
</feature>
<feature type="sequence variant" id="VAR_064106" description="In CLCD1." evidence="10">
    <original>A</original>
    <variation>V</variation>
    <location>
        <position position="362"/>
    </location>
</feature>
<feature type="sequence variant" id="VAR_079579" description="In CLCD1; unchanged subcellular localization; decreased transactivation activity." evidence="24">
    <location>
        <begin position="400"/>
        <end position="521"/>
    </location>
</feature>
<feature type="sequence variant" id="VAR_064107" description="In CLCD1." evidence="20">
    <original>T</original>
    <variation>I</variation>
    <location>
        <position position="420"/>
    </location>
</feature>
<feature type="sequence variant" id="VAR_064108" description="In CLCD1." evidence="21">
    <original>T</original>
    <variation>N</variation>
    <location>
        <position position="420"/>
    </location>
</feature>
<feature type="sequence variant" id="VAR_079580" description="In CLCD1; decreased protein stability; decreased transactivation activity; decreased osteoblast differentiation." evidence="25">
    <location>
        <begin position="462"/>
        <end position="521"/>
    </location>
</feature>
<feature type="sequence variant" id="VAR_012150" description="In dbSNP:rs11498198." evidence="6">
    <original>G</original>
    <variation>S</variation>
    <location>
        <position position="511"/>
    </location>
</feature>
<feature type="mutagenesis site" description="Reduced DNA-binding and impaired phosphorylation." evidence="17">
    <original>S</original>
    <variation>A</variation>
    <location>
        <position position="451"/>
    </location>
</feature>
<feature type="sequence conflict" description="In Ref. 4; AAC77441." evidence="30" ref="4">
    <original>N</original>
    <variation>S</variation>
    <location>
        <position position="16"/>
    </location>
</feature>
<feature type="modified residue" description="Phosphoserine" evidence="31">
    <location sequence="Q13950-3">
        <position position="340"/>
    </location>
</feature>
<comment type="function">
    <text evidence="1 11 24 25 26">Transcription factor involved in osteoblastic differentiation and skeletal morphogenesis (PubMed:28505335, PubMed:28703881, PubMed:28738062). Essential for the maturation of osteoblasts and both intramembranous and endochondral ossification. CBF binds to the core site, 5'-PYGPYGGT-3', of a number of enhancers and promoters, including murine leukemia virus, polyomavirus enhancer, T-cell receptor enhancers, osteocalcin, osteopontin, bone sialoprotein, alpha 1(I) collagen, LCK, IL-3 and GM-CSF promoters. In osteoblasts, supports transcription activation: synergizes with SPEN/MINT to enhance FGFR2-mediated activation of the osteocalcin FGF-responsive element (OCFRE) (By similarity). Inhibits KAT6B-dependent transcriptional activation.</text>
</comment>
<comment type="subunit">
    <text evidence="2 3 11 13 17 18">Heterodimer of an alpha and a beta subunit. The alpha subunit binds DNA as a monomer and through the Runt domain. DNA-binding is increased by heterodimerization. Interacts with XRCC6 (Ku70) and XRCC5 (Ku80). Interacts with HIVEP3. Interacts with IFI204. Interaction with SATB2; the interaction results in enhanced DNA binding and transactivation by these transcription factors. Binds to HIPK3. Interacts with FOXO1 (via a C-terminal region); the interaction inhibits RUNX2 transcriptional activity towards BGLAP. This interaction is prevented on insulin or IGF1 stimulation as FOXO1 is exported from the nucleus (By similarity). Interacts with CCNB1, KAT6A and KAT6B. Interacts with FOXP3. Interacts with TMEM119 (By similarity). Interacts with OLFM2 (By similarity). Interacts with IPO7; the interaction inhibits RUNX2 nuclear translocation in osteoblasts (By similarity).</text>
</comment>
<comment type="subunit">
    <molecule>Isoform 3</molecule>
    <text evidence="2">Interacts with DDX5.</text>
</comment>
<comment type="interaction">
    <interactant intactId="EBI-976402">
        <id>Q13950</id>
    </interactant>
    <interactant intactId="EBI-714158">
        <id>Q13526</id>
        <label>PIN1</label>
    </interactant>
    <organismsDiffer>false</organismsDiffer>
    <experiments>7</experiments>
</comment>
<comment type="interaction">
    <interactant intactId="EBI-976402">
        <id>Q13950</id>
    </interactant>
    <interactant intactId="EBI-1551512">
        <id>O15297</id>
        <label>PPM1D</label>
    </interactant>
    <organismsDiffer>false</organismsDiffer>
    <experiments>4</experiments>
</comment>
<comment type="interaction">
    <interactant intactId="EBI-976402">
        <id>Q13950</id>
    </interactant>
    <interactant intactId="EBI-976374">
        <id>O43541</id>
        <label>SMAD6</label>
    </interactant>
    <organismsDiffer>false</organismsDiffer>
    <experiments>3</experiments>
</comment>
<comment type="interaction">
    <interactant intactId="EBI-976402">
        <id>Q13950</id>
    </interactant>
    <interactant intactId="EBI-389606">
        <id>O15350</id>
        <label>TP73</label>
    </interactant>
    <organismsDiffer>false</organismsDiffer>
    <experiments>3</experiments>
</comment>
<comment type="interaction">
    <interactant intactId="EBI-976402">
        <id>Q13950</id>
    </interactant>
    <interactant intactId="EBI-396235">
        <id>P17480</id>
        <label>UBTF</label>
    </interactant>
    <organismsDiffer>false</organismsDiffer>
    <experiments>4</experiments>
</comment>
<comment type="subcellular location">
    <subcellularLocation>
        <location evidence="24 26">Nucleus</location>
    </subcellularLocation>
    <subcellularLocation>
        <location evidence="2">Cytoplasm</location>
    </subcellularLocation>
</comment>
<comment type="alternative products">
    <event type="alternative splicing"/>
    <isoform>
        <id>Q13950-1</id>
        <name>1</name>
        <name>Cbfa1a</name>
        <sequence type="displayed"/>
    </isoform>
    <isoform>
        <id>Q13950-2</id>
        <name>2</name>
        <sequence type="described" ref="VSP_005937"/>
    </isoform>
    <isoform>
        <id>Q13950-3</id>
        <name>3</name>
        <name>Cbfa1b</name>
        <sequence type="described" ref="VSP_005938"/>
    </isoform>
</comment>
<comment type="tissue specificity">
    <text>Specifically expressed in osteoblasts.</text>
</comment>
<comment type="domain">
    <text>A proline/serine/threonine rich region at the C-terminus is necessary for transcriptional activation of target genes and contains the phosphorylation sites.</text>
</comment>
<comment type="PTM">
    <text evidence="1 17">Phosphorylated; probably by MAP kinases (MAPK). Phosphorylation by HIPK3 is required for the SPEN/MINT and FGF2 transactivation during osteoblastic differentiation (By similarity). Phosphorylation at Ser-451 by CDK1 promotes endothelial cell proliferation required for tumor angiogenesis probably by facilitating cell cycle progression. Isoform 3 is phosphorylated on Ser-340.</text>
</comment>
<comment type="disease" evidence="6 7 8 9 10 12 14 15 16 19 20 21 23 24 25 26 27 28">
    <disease id="DI-01353">
        <name>Cleidocranial dysplasia 1</name>
        <acronym>CLCD1</acronym>
        <description>A form of cleidocranial dysplasia, a rare skeletal disorder with significant clinical variability, even within families. Patients typically present with delayed closure of cranial sutures and fontanels with multiple Wormian bones, retarded ossification of the skull, shortening of the distal phalanges, dental anomalies including supernumerary teeth and eruption failure, clavicular hypoplasia or aplasia, wide pubic symphysis, vertebral anomalies, and short stature. CLCD1 inheritance is autosomal dominant.</description>
        <dbReference type="MIM" id="119600"/>
    </disease>
    <text>The disease is caused by variants affecting the gene represented in this entry.</text>
</comment>
<comment type="disease" evidence="22">
    <disease id="DI-03699">
        <name>Metaphyseal dysplasia with maxillary hypoplasia with or without brachydactyly</name>
        <acronym>MDMHB</acronym>
        <description>An autosomal dominant bone dysplasia characterized by metaphyseal flaring of long bones, enlargement of the medial halves of the clavicles, maxillary hypoplasia, variable brachydactyly, and dystrophic teeth.</description>
        <dbReference type="MIM" id="156510"/>
    </disease>
    <text evidence="22">The disease is caused by variants affecting the gene represented in this entry. Analysis for copy-number variations revealed that a 105 kb duplication within RUNX2 segregated with the MDMHB phenotype in a region with maximum linkage. Real-time PCR for copy-number variation in genomic DNA in eight samples, as well as sequence analysis of fibroblast cDNA from one subject with MDMHB confirmed that affected family members were heterozygous for the presence of an intragenic duplication encompassing exons 3 to 5 of RUNX2. These three exons code for the Q/A domain and the functionally essential DNA-binding Runt domain of RUNX2. The RUNX2 duplication found in individuals with MDMHB leads to a gain of function (PubMed:23290074).</text>
</comment>
<comment type="online information" name="Atlas of Genetics and Cytogenetics in Oncology and Haematology">
    <link uri="https://atlasgeneticsoncology.org/gene/42183/RUNX2"/>
</comment>
<accession>Q13950</accession>
<accession>O14614</accession>
<accession>O14615</accession>
<accession>O95181</accession>
<dbReference type="EMBL" id="AF001450">
    <property type="protein sequence ID" value="AAB65159.2"/>
    <property type="molecule type" value="Genomic_DNA"/>
</dbReference>
<dbReference type="EMBL" id="AF001443">
    <property type="protein sequence ID" value="AAB65159.2"/>
    <property type="status" value="JOINED"/>
    <property type="molecule type" value="Genomic_DNA"/>
</dbReference>
<dbReference type="EMBL" id="AF001444">
    <property type="protein sequence ID" value="AAB65159.2"/>
    <property type="status" value="JOINED"/>
    <property type="molecule type" value="Genomic_DNA"/>
</dbReference>
<dbReference type="EMBL" id="AF001445">
    <property type="protein sequence ID" value="AAB65159.2"/>
    <property type="status" value="JOINED"/>
    <property type="molecule type" value="Genomic_DNA"/>
</dbReference>
<dbReference type="EMBL" id="AF001446">
    <property type="protein sequence ID" value="AAB65159.2"/>
    <property type="status" value="JOINED"/>
    <property type="molecule type" value="Genomic_DNA"/>
</dbReference>
<dbReference type="EMBL" id="AF001447">
    <property type="protein sequence ID" value="AAB65159.2"/>
    <property type="status" value="JOINED"/>
    <property type="molecule type" value="Genomic_DNA"/>
</dbReference>
<dbReference type="EMBL" id="AF001448">
    <property type="protein sequence ID" value="AAB65159.2"/>
    <property type="status" value="JOINED"/>
    <property type="molecule type" value="Genomic_DNA"/>
</dbReference>
<dbReference type="EMBL" id="AF001449">
    <property type="protein sequence ID" value="AAB65159.2"/>
    <property type="status" value="JOINED"/>
    <property type="molecule type" value="Genomic_DNA"/>
</dbReference>
<dbReference type="EMBL" id="AF001450">
    <property type="protein sequence ID" value="AAB65158.1"/>
    <property type="molecule type" value="Genomic_DNA"/>
</dbReference>
<dbReference type="EMBL" id="AF001444">
    <property type="protein sequence ID" value="AAB65158.1"/>
    <property type="status" value="JOINED"/>
    <property type="molecule type" value="Genomic_DNA"/>
</dbReference>
<dbReference type="EMBL" id="AF001445">
    <property type="protein sequence ID" value="AAB65158.1"/>
    <property type="status" value="JOINED"/>
    <property type="molecule type" value="Genomic_DNA"/>
</dbReference>
<dbReference type="EMBL" id="AF001446">
    <property type="protein sequence ID" value="AAB65158.1"/>
    <property type="status" value="JOINED"/>
    <property type="molecule type" value="Genomic_DNA"/>
</dbReference>
<dbReference type="EMBL" id="AF001447">
    <property type="protein sequence ID" value="AAB65158.1"/>
    <property type="status" value="JOINED"/>
    <property type="molecule type" value="Genomic_DNA"/>
</dbReference>
<dbReference type="EMBL" id="AF001448">
    <property type="protein sequence ID" value="AAB65158.1"/>
    <property type="status" value="JOINED"/>
    <property type="molecule type" value="Genomic_DNA"/>
</dbReference>
<dbReference type="EMBL" id="AF001449">
    <property type="protein sequence ID" value="AAB65158.1"/>
    <property type="status" value="JOINED"/>
    <property type="molecule type" value="Genomic_DNA"/>
</dbReference>
<dbReference type="EMBL" id="AL161907">
    <property type="status" value="NOT_ANNOTATED_CDS"/>
    <property type="molecule type" value="Genomic_DNA"/>
</dbReference>
<dbReference type="EMBL" id="AL358135">
    <property type="status" value="NOT_ANNOTATED_CDS"/>
    <property type="molecule type" value="Genomic_DNA"/>
</dbReference>
<dbReference type="EMBL" id="AL096865">
    <property type="status" value="NOT_ANNOTATED_CDS"/>
    <property type="molecule type" value="Genomic_DNA"/>
</dbReference>
<dbReference type="EMBL" id="AF053952">
    <property type="protein sequence ID" value="AAC78624.1"/>
    <property type="molecule type" value="mRNA"/>
</dbReference>
<dbReference type="EMBL" id="AF053949">
    <property type="protein sequence ID" value="AAC77441.1"/>
    <property type="molecule type" value="Genomic_DNA"/>
</dbReference>
<dbReference type="EMBL" id="L40992">
    <property type="protein sequence ID" value="AAA89072.1"/>
    <property type="molecule type" value="mRNA"/>
</dbReference>
<dbReference type="CCDS" id="CCDS43467.2">
    <molecule id="Q13950-1"/>
</dbReference>
<dbReference type="CCDS" id="CCDS43468.2">
    <molecule id="Q13950-3"/>
</dbReference>
<dbReference type="CCDS" id="CCDS4913.1">
    <molecule id="Q13950-2"/>
</dbReference>
<dbReference type="RefSeq" id="NP_001015051.3">
    <molecule id="Q13950-3"/>
    <property type="nucleotide sequence ID" value="NM_001015051.4"/>
</dbReference>
<dbReference type="RefSeq" id="NP_001019801.3">
    <molecule id="Q13950-1"/>
    <property type="nucleotide sequence ID" value="NM_001024630.4"/>
</dbReference>
<dbReference type="RefSeq" id="NP_001356334.1">
    <molecule id="Q13950-2"/>
    <property type="nucleotide sequence ID" value="NM_001369405.1"/>
</dbReference>
<dbReference type="PDB" id="6VG8">
    <property type="method" value="X-ray"/>
    <property type="resolution" value="4.31 A"/>
    <property type="chains" value="D=111-233"/>
</dbReference>
<dbReference type="PDB" id="6VGD">
    <property type="method" value="X-ray"/>
    <property type="resolution" value="4.20 A"/>
    <property type="chains" value="D=111-287"/>
</dbReference>
<dbReference type="PDB" id="6VGE">
    <property type="method" value="X-ray"/>
    <property type="resolution" value="4.25 A"/>
    <property type="chains" value="D=111-287"/>
</dbReference>
<dbReference type="PDB" id="6VGG">
    <property type="method" value="X-ray"/>
    <property type="resolution" value="4.31 A"/>
    <property type="chains" value="D=111-287"/>
</dbReference>
<dbReference type="PDBsum" id="6VG8"/>
<dbReference type="PDBsum" id="6VGD"/>
<dbReference type="PDBsum" id="6VGE"/>
<dbReference type="PDBsum" id="6VGG"/>
<dbReference type="BMRB" id="Q13950"/>
<dbReference type="SMR" id="Q13950"/>
<dbReference type="BioGRID" id="107308">
    <property type="interactions" value="80"/>
</dbReference>
<dbReference type="CORUM" id="Q13950"/>
<dbReference type="DIP" id="DIP-36707N"/>
<dbReference type="ELM" id="Q13950"/>
<dbReference type="FunCoup" id="Q13950">
    <property type="interactions" value="2841"/>
</dbReference>
<dbReference type="IntAct" id="Q13950">
    <property type="interactions" value="39"/>
</dbReference>
<dbReference type="MINT" id="Q13950"/>
<dbReference type="STRING" id="9606.ENSP00000360493"/>
<dbReference type="GlyCosmos" id="Q13950">
    <property type="glycosylation" value="3 sites, 1 glycan"/>
</dbReference>
<dbReference type="GlyGen" id="Q13950">
    <property type="glycosylation" value="4 sites, 1 O-linked glycan (4 sites)"/>
</dbReference>
<dbReference type="iPTMnet" id="Q13950"/>
<dbReference type="PhosphoSitePlus" id="Q13950"/>
<dbReference type="SwissPalm" id="Q13950"/>
<dbReference type="BioMuta" id="RUNX2"/>
<dbReference type="DMDM" id="17368460"/>
<dbReference type="jPOST" id="Q13950"/>
<dbReference type="MassIVE" id="Q13950"/>
<dbReference type="PaxDb" id="9606-ENSP00000360493"/>
<dbReference type="PeptideAtlas" id="Q13950"/>
<dbReference type="ProteomicsDB" id="59767">
    <molecule id="Q13950-1"/>
</dbReference>
<dbReference type="ProteomicsDB" id="59768">
    <molecule id="Q13950-2"/>
</dbReference>
<dbReference type="ProteomicsDB" id="59769">
    <molecule id="Q13950-3"/>
</dbReference>
<dbReference type="Antibodypedia" id="3645">
    <property type="antibodies" value="895 antibodies from 45 providers"/>
</dbReference>
<dbReference type="DNASU" id="860"/>
<dbReference type="Ensembl" id="ENST00000359524.7">
    <molecule id="Q13950-2"/>
    <property type="protein sequence ID" value="ENSP00000352514.5"/>
    <property type="gene ID" value="ENSG00000124813.23"/>
</dbReference>
<dbReference type="Ensembl" id="ENST00000371432.7">
    <molecule id="Q13950-3"/>
    <property type="protein sequence ID" value="ENSP00000360486.4"/>
    <property type="gene ID" value="ENSG00000124813.23"/>
</dbReference>
<dbReference type="Ensembl" id="ENST00000371436.10">
    <molecule id="Q13950-3"/>
    <property type="protein sequence ID" value="ENSP00000360491.6"/>
    <property type="gene ID" value="ENSG00000124813.23"/>
</dbReference>
<dbReference type="Ensembl" id="ENST00000371438.5">
    <molecule id="Q13950-1"/>
    <property type="protein sequence ID" value="ENSP00000360493.1"/>
    <property type="gene ID" value="ENSG00000124813.23"/>
</dbReference>
<dbReference type="Ensembl" id="ENST00000647337.2">
    <molecule id="Q13950-1"/>
    <property type="protein sequence ID" value="ENSP00000495497.1"/>
    <property type="gene ID" value="ENSG00000124813.23"/>
</dbReference>
<dbReference type="GeneID" id="860"/>
<dbReference type="KEGG" id="hsa:860"/>
<dbReference type="MANE-Select" id="ENST00000647337.2">
    <property type="protein sequence ID" value="ENSP00000495497.1"/>
    <property type="RefSeq nucleotide sequence ID" value="NM_001024630.4"/>
    <property type="RefSeq protein sequence ID" value="NP_001019801.3"/>
</dbReference>
<dbReference type="UCSC" id="uc003oxt.5">
    <molecule id="Q13950-1"/>
    <property type="organism name" value="human"/>
</dbReference>
<dbReference type="AGR" id="HGNC:10472"/>
<dbReference type="CTD" id="860"/>
<dbReference type="DisGeNET" id="860"/>
<dbReference type="GeneCards" id="RUNX2"/>
<dbReference type="GeneReviews" id="RUNX2"/>
<dbReference type="HGNC" id="HGNC:10472">
    <property type="gene designation" value="RUNX2"/>
</dbReference>
<dbReference type="HPA" id="ENSG00000124813">
    <property type="expression patterns" value="Tissue enhanced (salivary)"/>
</dbReference>
<dbReference type="MalaCards" id="RUNX2"/>
<dbReference type="MIM" id="119600">
    <property type="type" value="phenotype"/>
</dbReference>
<dbReference type="MIM" id="156510">
    <property type="type" value="phenotype"/>
</dbReference>
<dbReference type="MIM" id="600211">
    <property type="type" value="gene"/>
</dbReference>
<dbReference type="neXtProt" id="NX_Q13950"/>
<dbReference type="OpenTargets" id="ENSG00000124813"/>
<dbReference type="Orphanet" id="1452">
    <property type="disease" value="Cleidocranial dysplasia"/>
</dbReference>
<dbReference type="Orphanet" id="2504">
    <property type="disease" value="Metaphyseal dysplasia-maxillary hypoplasia-brachydacty syndrome"/>
</dbReference>
<dbReference type="PharmGKB" id="PA34885"/>
<dbReference type="VEuPathDB" id="HostDB:ENSG00000124813"/>
<dbReference type="eggNOG" id="KOG3982">
    <property type="taxonomic scope" value="Eukaryota"/>
</dbReference>
<dbReference type="GeneTree" id="ENSGT00940000160171"/>
<dbReference type="InParanoid" id="Q13950"/>
<dbReference type="OMA" id="HENRTMV"/>
<dbReference type="OrthoDB" id="10029800at2759"/>
<dbReference type="PAN-GO" id="Q13950">
    <property type="GO annotations" value="8 GO annotations based on evolutionary models"/>
</dbReference>
<dbReference type="PhylomeDB" id="Q13950"/>
<dbReference type="TreeFam" id="TF321496"/>
<dbReference type="PathwayCommons" id="Q13950"/>
<dbReference type="Reactome" id="R-HSA-2032785">
    <property type="pathway name" value="YAP1- and WWTR1 (TAZ)-stimulated gene expression"/>
</dbReference>
<dbReference type="Reactome" id="R-HSA-8878166">
    <property type="pathway name" value="Transcriptional regulation by RUNX2"/>
</dbReference>
<dbReference type="Reactome" id="R-HSA-8939246">
    <property type="pathway name" value="RUNX1 regulates transcription of genes involved in differentiation of myeloid cells"/>
</dbReference>
<dbReference type="Reactome" id="R-HSA-8939902">
    <property type="pathway name" value="Regulation of RUNX2 expression and activity"/>
</dbReference>
<dbReference type="Reactome" id="R-HSA-8940973">
    <property type="pathway name" value="RUNX2 regulates osteoblast differentiation"/>
</dbReference>
<dbReference type="Reactome" id="R-HSA-8941284">
    <property type="pathway name" value="RUNX2 regulates chondrocyte maturation"/>
</dbReference>
<dbReference type="Reactome" id="R-HSA-8941326">
    <property type="pathway name" value="RUNX2 regulates bone development"/>
</dbReference>
<dbReference type="Reactome" id="R-HSA-8941332">
    <property type="pathway name" value="RUNX2 regulates genes involved in cell migration"/>
</dbReference>
<dbReference type="Reactome" id="R-HSA-8941333">
    <property type="pathway name" value="RUNX2 regulates genes involved in differentiation of myeloid cells"/>
</dbReference>
<dbReference type="SignaLink" id="Q13950"/>
<dbReference type="SIGNOR" id="Q13950"/>
<dbReference type="BioGRID-ORCS" id="860">
    <property type="hits" value="51 hits in 1175 CRISPR screens"/>
</dbReference>
<dbReference type="CD-CODE" id="38EC0B30">
    <property type="entry name" value="Transcriptional condensate"/>
</dbReference>
<dbReference type="ChiTaRS" id="RUNX2">
    <property type="organism name" value="human"/>
</dbReference>
<dbReference type="GeneWiki" id="RUNX2"/>
<dbReference type="GenomeRNAi" id="860"/>
<dbReference type="Pharos" id="Q13950">
    <property type="development level" value="Tbio"/>
</dbReference>
<dbReference type="PRO" id="PR:Q13950"/>
<dbReference type="Proteomes" id="UP000005640">
    <property type="component" value="Chromosome 6"/>
</dbReference>
<dbReference type="RNAct" id="Q13950">
    <property type="molecule type" value="protein"/>
</dbReference>
<dbReference type="Bgee" id="ENSG00000124813">
    <property type="expression patterns" value="Expressed in tibia and 164 other cell types or tissues"/>
</dbReference>
<dbReference type="ExpressionAtlas" id="Q13950">
    <property type="expression patterns" value="baseline and differential"/>
</dbReference>
<dbReference type="GO" id="GO:0000785">
    <property type="term" value="C:chromatin"/>
    <property type="evidence" value="ECO:0000250"/>
    <property type="project" value="BHF-UCL"/>
</dbReference>
<dbReference type="GO" id="GO:0005737">
    <property type="term" value="C:cytoplasm"/>
    <property type="evidence" value="ECO:0000250"/>
    <property type="project" value="UniProtKB"/>
</dbReference>
<dbReference type="GO" id="GO:0005829">
    <property type="term" value="C:cytosol"/>
    <property type="evidence" value="ECO:0000304"/>
    <property type="project" value="Reactome"/>
</dbReference>
<dbReference type="GO" id="GO:0005654">
    <property type="term" value="C:nucleoplasm"/>
    <property type="evidence" value="ECO:0000314"/>
    <property type="project" value="HPA"/>
</dbReference>
<dbReference type="GO" id="GO:0005634">
    <property type="term" value="C:nucleus"/>
    <property type="evidence" value="ECO:0000314"/>
    <property type="project" value="UniProtKB"/>
</dbReference>
<dbReference type="GO" id="GO:0005667">
    <property type="term" value="C:transcription regulator complex"/>
    <property type="evidence" value="ECO:0007669"/>
    <property type="project" value="Ensembl"/>
</dbReference>
<dbReference type="GO" id="GO:0005524">
    <property type="term" value="F:ATP binding"/>
    <property type="evidence" value="ECO:0007669"/>
    <property type="project" value="InterPro"/>
</dbReference>
<dbReference type="GO" id="GO:0043425">
    <property type="term" value="F:bHLH transcription factor binding"/>
    <property type="evidence" value="ECO:0007669"/>
    <property type="project" value="Ensembl"/>
</dbReference>
<dbReference type="GO" id="GO:0031490">
    <property type="term" value="F:chromatin DNA binding"/>
    <property type="evidence" value="ECO:0007669"/>
    <property type="project" value="Ensembl"/>
</dbReference>
<dbReference type="GO" id="GO:0001228">
    <property type="term" value="F:DNA-binding transcription activator activity, RNA polymerase II-specific"/>
    <property type="evidence" value="ECO:0007669"/>
    <property type="project" value="Ensembl"/>
</dbReference>
<dbReference type="GO" id="GO:0003700">
    <property type="term" value="F:DNA-binding transcription factor activity"/>
    <property type="evidence" value="ECO:0000303"/>
    <property type="project" value="ProtInc"/>
</dbReference>
<dbReference type="GO" id="GO:0000981">
    <property type="term" value="F:DNA-binding transcription factor activity, RNA polymerase II-specific"/>
    <property type="evidence" value="ECO:0000247"/>
    <property type="project" value="NTNU_SB"/>
</dbReference>
<dbReference type="GO" id="GO:0019904">
    <property type="term" value="F:protein domain specific binding"/>
    <property type="evidence" value="ECO:0007669"/>
    <property type="project" value="Ensembl"/>
</dbReference>
<dbReference type="GO" id="GO:0000978">
    <property type="term" value="F:RNA polymerase II cis-regulatory region sequence-specific DNA binding"/>
    <property type="evidence" value="ECO:0000318"/>
    <property type="project" value="GO_Central"/>
</dbReference>
<dbReference type="GO" id="GO:1990837">
    <property type="term" value="F:sequence-specific double-stranded DNA binding"/>
    <property type="evidence" value="ECO:0000314"/>
    <property type="project" value="ARUK-UCL"/>
</dbReference>
<dbReference type="GO" id="GO:0030509">
    <property type="term" value="P:BMP signaling pathway"/>
    <property type="evidence" value="ECO:0000250"/>
    <property type="project" value="BHF-UCL"/>
</dbReference>
<dbReference type="GO" id="GO:0030282">
    <property type="term" value="P:bone mineralization"/>
    <property type="evidence" value="ECO:0007669"/>
    <property type="project" value="Ensembl"/>
</dbReference>
<dbReference type="GO" id="GO:0048469">
    <property type="term" value="P:cell maturation"/>
    <property type="evidence" value="ECO:0007669"/>
    <property type="project" value="Ensembl"/>
</dbReference>
<dbReference type="GO" id="GO:0002063">
    <property type="term" value="P:chondrocyte development"/>
    <property type="evidence" value="ECO:0007669"/>
    <property type="project" value="Ensembl"/>
</dbReference>
<dbReference type="GO" id="GO:0002062">
    <property type="term" value="P:chondrocyte differentiation"/>
    <property type="evidence" value="ECO:0000318"/>
    <property type="project" value="GO_Central"/>
</dbReference>
<dbReference type="GO" id="GO:0048701">
    <property type="term" value="P:embryonic cranial skeleton morphogenesis"/>
    <property type="evidence" value="ECO:0007669"/>
    <property type="project" value="Ensembl"/>
</dbReference>
<dbReference type="GO" id="GO:0035115">
    <property type="term" value="P:embryonic forelimb morphogenesis"/>
    <property type="evidence" value="ECO:0007669"/>
    <property type="project" value="Ensembl"/>
</dbReference>
<dbReference type="GO" id="GO:0001958">
    <property type="term" value="P:endochondral ossification"/>
    <property type="evidence" value="ECO:0007669"/>
    <property type="project" value="Ensembl"/>
</dbReference>
<dbReference type="GO" id="GO:0050673">
    <property type="term" value="P:epithelial cell proliferation"/>
    <property type="evidence" value="ECO:0007669"/>
    <property type="project" value="Ensembl"/>
</dbReference>
<dbReference type="GO" id="GO:0010467">
    <property type="term" value="P:gene expression"/>
    <property type="evidence" value="ECO:0007669"/>
    <property type="project" value="Ensembl"/>
</dbReference>
<dbReference type="GO" id="GO:0030097">
    <property type="term" value="P:hemopoiesis"/>
    <property type="evidence" value="ECO:0000318"/>
    <property type="project" value="GO_Central"/>
</dbReference>
<dbReference type="GO" id="GO:0036076">
    <property type="term" value="P:ligamentous ossification"/>
    <property type="evidence" value="ECO:0007669"/>
    <property type="project" value="Ensembl"/>
</dbReference>
<dbReference type="GO" id="GO:0045892">
    <property type="term" value="P:negative regulation of DNA-templated transcription"/>
    <property type="evidence" value="ECO:0000314"/>
    <property type="project" value="UniProtKB"/>
</dbReference>
<dbReference type="GO" id="GO:0045879">
    <property type="term" value="P:negative regulation of smoothened signaling pathway"/>
    <property type="evidence" value="ECO:0007669"/>
    <property type="project" value="Ensembl"/>
</dbReference>
<dbReference type="GO" id="GO:0030182">
    <property type="term" value="P:neuron differentiation"/>
    <property type="evidence" value="ECO:0000318"/>
    <property type="project" value="GO_Central"/>
</dbReference>
<dbReference type="GO" id="GO:0042475">
    <property type="term" value="P:odontogenesis of dentin-containing tooth"/>
    <property type="evidence" value="ECO:0007669"/>
    <property type="project" value="Ensembl"/>
</dbReference>
<dbReference type="GO" id="GO:0001503">
    <property type="term" value="P:ossification"/>
    <property type="evidence" value="ECO:0000318"/>
    <property type="project" value="GO_Central"/>
</dbReference>
<dbReference type="GO" id="GO:0002076">
    <property type="term" value="P:osteoblast development"/>
    <property type="evidence" value="ECO:0007669"/>
    <property type="project" value="Ensembl"/>
</dbReference>
<dbReference type="GO" id="GO:0001649">
    <property type="term" value="P:osteoblast differentiation"/>
    <property type="evidence" value="ECO:0000316"/>
    <property type="project" value="BHF-UCL"/>
</dbReference>
<dbReference type="GO" id="GO:0002051">
    <property type="term" value="P:osteoblast fate commitment"/>
    <property type="evidence" value="ECO:0007669"/>
    <property type="project" value="Ensembl"/>
</dbReference>
<dbReference type="GO" id="GO:0032332">
    <property type="term" value="P:positive regulation of chondrocyte differentiation"/>
    <property type="evidence" value="ECO:0007669"/>
    <property type="project" value="Ensembl"/>
</dbReference>
<dbReference type="GO" id="GO:0045893">
    <property type="term" value="P:positive regulation of DNA-templated transcription"/>
    <property type="evidence" value="ECO:0000314"/>
    <property type="project" value="UniProtKB"/>
</dbReference>
<dbReference type="GO" id="GO:0050679">
    <property type="term" value="P:positive regulation of epithelial cell proliferation"/>
    <property type="evidence" value="ECO:0007669"/>
    <property type="project" value="Ensembl"/>
</dbReference>
<dbReference type="GO" id="GO:0010628">
    <property type="term" value="P:positive regulation of gene expression"/>
    <property type="evidence" value="ECO:0007669"/>
    <property type="project" value="Ensembl"/>
</dbReference>
<dbReference type="GO" id="GO:0045669">
    <property type="term" value="P:positive regulation of osteoblast differentiation"/>
    <property type="evidence" value="ECO:0000315"/>
    <property type="project" value="UniProtKB"/>
</dbReference>
<dbReference type="GO" id="GO:2000648">
    <property type="term" value="P:positive regulation of stem cell proliferation"/>
    <property type="evidence" value="ECO:0007669"/>
    <property type="project" value="Ensembl"/>
</dbReference>
<dbReference type="GO" id="GO:0045944">
    <property type="term" value="P:positive regulation of transcription by RNA polymerase II"/>
    <property type="evidence" value="ECO:0000315"/>
    <property type="project" value="UniProtKB"/>
</dbReference>
<dbReference type="GO" id="GO:0045595">
    <property type="term" value="P:regulation of cell differentiation"/>
    <property type="evidence" value="ECO:0000318"/>
    <property type="project" value="GO_Central"/>
</dbReference>
<dbReference type="GO" id="GO:0040036">
    <property type="term" value="P:regulation of fibroblast growth factor receptor signaling pathway"/>
    <property type="evidence" value="ECO:0007669"/>
    <property type="project" value="Ensembl"/>
</dbReference>
<dbReference type="GO" id="GO:0042487">
    <property type="term" value="P:regulation of odontogenesis of dentin-containing tooth"/>
    <property type="evidence" value="ECO:0007669"/>
    <property type="project" value="Ensembl"/>
</dbReference>
<dbReference type="GO" id="GO:0030278">
    <property type="term" value="P:regulation of ossification"/>
    <property type="evidence" value="ECO:0007669"/>
    <property type="project" value="Ensembl"/>
</dbReference>
<dbReference type="GO" id="GO:0006357">
    <property type="term" value="P:regulation of transcription by RNA polymerase II"/>
    <property type="evidence" value="ECO:0000318"/>
    <property type="project" value="GO_Central"/>
</dbReference>
<dbReference type="GO" id="GO:1904383">
    <property type="term" value="P:response to sodium phosphate"/>
    <property type="evidence" value="ECO:0007669"/>
    <property type="project" value="Ensembl"/>
</dbReference>
<dbReference type="GO" id="GO:0060395">
    <property type="term" value="P:SMAD protein signal transduction"/>
    <property type="evidence" value="ECO:0000316"/>
    <property type="project" value="BHF-UCL"/>
</dbReference>
<dbReference type="GO" id="GO:0007224">
    <property type="term" value="P:smoothened signaling pathway"/>
    <property type="evidence" value="ECO:0007669"/>
    <property type="project" value="Ensembl"/>
</dbReference>
<dbReference type="GO" id="GO:0048863">
    <property type="term" value="P:stem cell differentiation"/>
    <property type="evidence" value="ECO:0007669"/>
    <property type="project" value="Ensembl"/>
</dbReference>
<dbReference type="GO" id="GO:0072089">
    <property type="term" value="P:stem cell proliferation"/>
    <property type="evidence" value="ECO:0007669"/>
    <property type="project" value="Ensembl"/>
</dbReference>
<dbReference type="GO" id="GO:0030217">
    <property type="term" value="P:T cell differentiation"/>
    <property type="evidence" value="ECO:0007669"/>
    <property type="project" value="Ensembl"/>
</dbReference>
<dbReference type="FunFam" id="2.60.40.720:FF:000001">
    <property type="entry name" value="Runt-related transcription factor"/>
    <property type="match status" value="1"/>
</dbReference>
<dbReference type="FunFam" id="4.10.770.10:FF:000001">
    <property type="entry name" value="Runt-related transcription factor"/>
    <property type="match status" value="1"/>
</dbReference>
<dbReference type="Gene3D" id="2.60.40.720">
    <property type="match status" value="1"/>
</dbReference>
<dbReference type="Gene3D" id="4.10.770.10">
    <property type="entry name" value="Signal Protein Aml-1b, Chain A, domain 3"/>
    <property type="match status" value="1"/>
</dbReference>
<dbReference type="InterPro" id="IPR000040">
    <property type="entry name" value="AML1_Runt"/>
</dbReference>
<dbReference type="InterPro" id="IPR008967">
    <property type="entry name" value="p53-like_TF_DNA-bd_sf"/>
</dbReference>
<dbReference type="InterPro" id="IPR012346">
    <property type="entry name" value="p53/RUNT-type_TF_DNA-bd_sf"/>
</dbReference>
<dbReference type="InterPro" id="IPR013524">
    <property type="entry name" value="Runt_dom"/>
</dbReference>
<dbReference type="InterPro" id="IPR027384">
    <property type="entry name" value="Runx_central_dom_sf"/>
</dbReference>
<dbReference type="InterPro" id="IPR013711">
    <property type="entry name" value="RunxI_C_dom"/>
</dbReference>
<dbReference type="InterPro" id="IPR016554">
    <property type="entry name" value="TF_Runt-rel_RUNX"/>
</dbReference>
<dbReference type="PANTHER" id="PTHR11950">
    <property type="entry name" value="RUNT RELATED"/>
    <property type="match status" value="1"/>
</dbReference>
<dbReference type="PANTHER" id="PTHR11950:SF7">
    <property type="entry name" value="RUNT-RELATED TRANSCRIPTION FACTOR 2"/>
    <property type="match status" value="1"/>
</dbReference>
<dbReference type="Pfam" id="PF00853">
    <property type="entry name" value="Runt"/>
    <property type="match status" value="1"/>
</dbReference>
<dbReference type="Pfam" id="PF08504">
    <property type="entry name" value="RunxI"/>
    <property type="match status" value="1"/>
</dbReference>
<dbReference type="PIRSF" id="PIRSF009374">
    <property type="entry name" value="TF_Runt-rel_RUNX"/>
    <property type="match status" value="1"/>
</dbReference>
<dbReference type="PRINTS" id="PR00967">
    <property type="entry name" value="ONCOGENEAML1"/>
</dbReference>
<dbReference type="SUPFAM" id="SSF49417">
    <property type="entry name" value="p53-like transcription factors"/>
    <property type="match status" value="1"/>
</dbReference>
<dbReference type="PROSITE" id="PS51062">
    <property type="entry name" value="RUNT"/>
    <property type="match status" value="1"/>
</dbReference>
<evidence type="ECO:0000250" key="1"/>
<evidence type="ECO:0000250" key="2">
    <source>
        <dbReference type="UniProtKB" id="Q08775"/>
    </source>
</evidence>
<evidence type="ECO:0000250" key="3">
    <source>
        <dbReference type="UniProtKB" id="Q9Z2J9"/>
    </source>
</evidence>
<evidence type="ECO:0000255" key="4">
    <source>
        <dbReference type="PROSITE-ProRule" id="PRU00399"/>
    </source>
</evidence>
<evidence type="ECO:0000256" key="5">
    <source>
        <dbReference type="SAM" id="MobiDB-lite"/>
    </source>
</evidence>
<evidence type="ECO:0000269" key="6">
    <source>
    </source>
</evidence>
<evidence type="ECO:0000269" key="7">
    <source>
    </source>
</evidence>
<evidence type="ECO:0000269" key="8">
    <source>
    </source>
</evidence>
<evidence type="ECO:0000269" key="9">
    <source>
    </source>
</evidence>
<evidence type="ECO:0000269" key="10">
    <source>
    </source>
</evidence>
<evidence type="ECO:0000269" key="11">
    <source>
    </source>
</evidence>
<evidence type="ECO:0000269" key="12">
    <source>
    </source>
</evidence>
<evidence type="ECO:0000269" key="13">
    <source>
    </source>
</evidence>
<evidence type="ECO:0000269" key="14">
    <source>
    </source>
</evidence>
<evidence type="ECO:0000269" key="15">
    <source>
    </source>
</evidence>
<evidence type="ECO:0000269" key="16">
    <source>
    </source>
</evidence>
<evidence type="ECO:0000269" key="17">
    <source>
    </source>
</evidence>
<evidence type="ECO:0000269" key="18">
    <source>
    </source>
</evidence>
<evidence type="ECO:0000269" key="19">
    <source>
    </source>
</evidence>
<evidence type="ECO:0000269" key="20">
    <source>
    </source>
</evidence>
<evidence type="ECO:0000269" key="21">
    <source>
    </source>
</evidence>
<evidence type="ECO:0000269" key="22">
    <source>
    </source>
</evidence>
<evidence type="ECO:0000269" key="23">
    <source>
    </source>
</evidence>
<evidence type="ECO:0000269" key="24">
    <source>
    </source>
</evidence>
<evidence type="ECO:0000269" key="25">
    <source>
    </source>
</evidence>
<evidence type="ECO:0000269" key="26">
    <source>
    </source>
</evidence>
<evidence type="ECO:0000269" key="27">
    <source>
    </source>
</evidence>
<evidence type="ECO:0000269" key="28">
    <source>
    </source>
</evidence>
<evidence type="ECO:0000303" key="29">
    <source>
    </source>
</evidence>
<evidence type="ECO:0000305" key="30"/>
<evidence type="ECO:0007744" key="31">
    <source>
    </source>
</evidence>
<evidence type="ECO:0007744" key="32">
    <source>
    </source>
</evidence>
<gene>
    <name type="primary">RUNX2</name>
    <name type="synonym">AML3</name>
    <name type="synonym">CBFA1</name>
    <name type="synonym">OSF2</name>
    <name type="synonym">PEBP2A</name>
</gene>
<proteinExistence type="evidence at protein level"/>
<sequence>MASNSLFSTVTPCQQNFFWDPSTSRRFSPPSSSLQPGKMSDVSPVVAAQQQQQQQQQQQQQQQQQQQQQQQEAAAAAAAAAAAAAAAAAVPRLRPPHDNRTMVEIIADHPAELVRTDSPNFLCSVLPSHWRCNKTLPVAFKVVALGEVPDGTVVTVMAGNDENYSAELRNASAVMKNQVARFNDLRFVGRSGRGKSFTLTITVFTNPPQVATYHRAIKVTVDGPREPRRHRQKLDDSKPSLFSDRLSDLGRIPHPSMRVGVPPQNPRPSLNSAPSPFNPQGQSQITDPRQAQSSPPWSYDQSYPSYLSQMTSPSIHSTTPLSSTRGTGLPAITDVPRRISDDDTATSDFCLWPSTLSKKSQAGASELGPFSDPRQFPSISSLTESRFSNPRMHYPATFTYTPPVTSGMSLGMSATTHYHTYLPPPYPGSSQSQSGPFQTSSTPYLYYGTSSGSYQFPMVPGGDRSPSRMLPPCTTTSNGSTLLNPNLPNQNDGVDADGSHSSSPTVLNSSGRMDESVWRPY</sequence>
<reference key="1">
    <citation type="journal article" date="1997" name="Cell">
        <title>Mutations involving the transcription factor CBFA1 cause cleidocranial dysplasia.</title>
        <authorList>
            <person name="Mundlos S."/>
            <person name="Otto F."/>
            <person name="Mundlos C."/>
            <person name="Mulliken J.B."/>
            <person name="Aylsworth A.S."/>
            <person name="Albright S."/>
            <person name="Lindhout D."/>
            <person name="Cole W.G."/>
            <person name="Henn W."/>
            <person name="Knoll J.H.M."/>
            <person name="Owen M.J."/>
            <person name="Mertelsmann R."/>
            <person name="Zabel B.U."/>
            <person name="Olsen B.R."/>
        </authorList>
    </citation>
    <scope>NUCLEOTIDE SEQUENCE [GENOMIC DNA] (ISOFORMS 1 AND 2)</scope>
    <scope>VARIANT CLCD1 ALA-ALA-ALA-ALA-ALA-ALA-ALA-ALA-ALA-ALA-84 INS</scope>
    <scope>VARIANT 78-ALA--ALA-83 DEL</scope>
    <scope>INVOLVEMENT IN CLCD1</scope>
</reference>
<reference key="2">
    <citation type="journal article" date="1998" name="Mamm. Genome">
        <title>Genomic organization, expression of the human CBFA1 gene, and evidence for an alternative splicing event affecting protein function.</title>
        <authorList>
            <person name="Geoffroy V."/>
            <person name="Corral D.A."/>
            <person name="Zhou L."/>
            <person name="Lee B."/>
            <person name="Karsenty G."/>
        </authorList>
    </citation>
    <scope>NUCLEOTIDE SEQUENCE [GENOMIC DNA]</scope>
    <scope>ALTERNATIVE SPLICING (ISOFORMS 1 AND 3)</scope>
</reference>
<reference key="3">
    <citation type="journal article" date="2003" name="Nature">
        <title>The DNA sequence and analysis of human chromosome 6.</title>
        <authorList>
            <person name="Mungall A.J."/>
            <person name="Palmer S.A."/>
            <person name="Sims S.K."/>
            <person name="Edwards C.A."/>
            <person name="Ashurst J.L."/>
            <person name="Wilming L."/>
            <person name="Jones M.C."/>
            <person name="Horton R."/>
            <person name="Hunt S.E."/>
            <person name="Scott C.E."/>
            <person name="Gilbert J.G.R."/>
            <person name="Clamp M.E."/>
            <person name="Bethel G."/>
            <person name="Milne S."/>
            <person name="Ainscough R."/>
            <person name="Almeida J.P."/>
            <person name="Ambrose K.D."/>
            <person name="Andrews T.D."/>
            <person name="Ashwell R.I.S."/>
            <person name="Babbage A.K."/>
            <person name="Bagguley C.L."/>
            <person name="Bailey J."/>
            <person name="Banerjee R."/>
            <person name="Barker D.J."/>
            <person name="Barlow K.F."/>
            <person name="Bates K."/>
            <person name="Beare D.M."/>
            <person name="Beasley H."/>
            <person name="Beasley O."/>
            <person name="Bird C.P."/>
            <person name="Blakey S.E."/>
            <person name="Bray-Allen S."/>
            <person name="Brook J."/>
            <person name="Brown A.J."/>
            <person name="Brown J.Y."/>
            <person name="Burford D.C."/>
            <person name="Burrill W."/>
            <person name="Burton J."/>
            <person name="Carder C."/>
            <person name="Carter N.P."/>
            <person name="Chapman J.C."/>
            <person name="Clark S.Y."/>
            <person name="Clark G."/>
            <person name="Clee C.M."/>
            <person name="Clegg S."/>
            <person name="Cobley V."/>
            <person name="Collier R.E."/>
            <person name="Collins J.E."/>
            <person name="Colman L.K."/>
            <person name="Corby N.R."/>
            <person name="Coville G.J."/>
            <person name="Culley K.M."/>
            <person name="Dhami P."/>
            <person name="Davies J."/>
            <person name="Dunn M."/>
            <person name="Earthrowl M.E."/>
            <person name="Ellington A.E."/>
            <person name="Evans K.A."/>
            <person name="Faulkner L."/>
            <person name="Francis M.D."/>
            <person name="Frankish A."/>
            <person name="Frankland J."/>
            <person name="French L."/>
            <person name="Garner P."/>
            <person name="Garnett J."/>
            <person name="Ghori M.J."/>
            <person name="Gilby L.M."/>
            <person name="Gillson C.J."/>
            <person name="Glithero R.J."/>
            <person name="Grafham D.V."/>
            <person name="Grant M."/>
            <person name="Gribble S."/>
            <person name="Griffiths C."/>
            <person name="Griffiths M.N.D."/>
            <person name="Hall R."/>
            <person name="Halls K.S."/>
            <person name="Hammond S."/>
            <person name="Harley J.L."/>
            <person name="Hart E.A."/>
            <person name="Heath P.D."/>
            <person name="Heathcott R."/>
            <person name="Holmes S.J."/>
            <person name="Howden P.J."/>
            <person name="Howe K.L."/>
            <person name="Howell G.R."/>
            <person name="Huckle E."/>
            <person name="Humphray S.J."/>
            <person name="Humphries M.D."/>
            <person name="Hunt A.R."/>
            <person name="Johnson C.M."/>
            <person name="Joy A.A."/>
            <person name="Kay M."/>
            <person name="Keenan S.J."/>
            <person name="Kimberley A.M."/>
            <person name="King A."/>
            <person name="Laird G.K."/>
            <person name="Langford C."/>
            <person name="Lawlor S."/>
            <person name="Leongamornlert D.A."/>
            <person name="Leversha M."/>
            <person name="Lloyd C.R."/>
            <person name="Lloyd D.M."/>
            <person name="Loveland J.E."/>
            <person name="Lovell J."/>
            <person name="Martin S."/>
            <person name="Mashreghi-Mohammadi M."/>
            <person name="Maslen G.L."/>
            <person name="Matthews L."/>
            <person name="McCann O.T."/>
            <person name="McLaren S.J."/>
            <person name="McLay K."/>
            <person name="McMurray A."/>
            <person name="Moore M.J.F."/>
            <person name="Mullikin J.C."/>
            <person name="Niblett D."/>
            <person name="Nickerson T."/>
            <person name="Novik K.L."/>
            <person name="Oliver K."/>
            <person name="Overton-Larty E.K."/>
            <person name="Parker A."/>
            <person name="Patel R."/>
            <person name="Pearce A.V."/>
            <person name="Peck A.I."/>
            <person name="Phillimore B.J.C.T."/>
            <person name="Phillips S."/>
            <person name="Plumb R.W."/>
            <person name="Porter K.M."/>
            <person name="Ramsey Y."/>
            <person name="Ranby S.A."/>
            <person name="Rice C.M."/>
            <person name="Ross M.T."/>
            <person name="Searle S.M."/>
            <person name="Sehra H.K."/>
            <person name="Sheridan E."/>
            <person name="Skuce C.D."/>
            <person name="Smith S."/>
            <person name="Smith M."/>
            <person name="Spraggon L."/>
            <person name="Squares S.L."/>
            <person name="Steward C.A."/>
            <person name="Sycamore N."/>
            <person name="Tamlyn-Hall G."/>
            <person name="Tester J."/>
            <person name="Theaker A.J."/>
            <person name="Thomas D.W."/>
            <person name="Thorpe A."/>
            <person name="Tracey A."/>
            <person name="Tromans A."/>
            <person name="Tubby B."/>
            <person name="Wall M."/>
            <person name="Wallis J.M."/>
            <person name="West A.P."/>
            <person name="White S.S."/>
            <person name="Whitehead S.L."/>
            <person name="Whittaker H."/>
            <person name="Wild A."/>
            <person name="Willey D.J."/>
            <person name="Wilmer T.E."/>
            <person name="Wood J.M."/>
            <person name="Wray P.W."/>
            <person name="Wyatt J.C."/>
            <person name="Young L."/>
            <person name="Younger R.M."/>
            <person name="Bentley D.R."/>
            <person name="Coulson A."/>
            <person name="Durbin R.M."/>
            <person name="Hubbard T."/>
            <person name="Sulston J.E."/>
            <person name="Dunham I."/>
            <person name="Rogers J."/>
            <person name="Beck S."/>
        </authorList>
    </citation>
    <scope>NUCLEOTIDE SEQUENCE [LARGE SCALE GENOMIC DNA]</scope>
</reference>
<reference key="4">
    <citation type="journal article" date="1998" name="Gene">
        <title>Genomic structure and isoform expression of the mouse, rat and human Cbfa1/Osf2 transcription factor.</title>
        <authorList>
            <person name="Xiao Z.S."/>
            <person name="Thomas R."/>
            <person name="Hinson T.K."/>
            <person name="Quarles L.D."/>
        </authorList>
    </citation>
    <scope>NUCLEOTIDE SEQUENCE [GENOMIC DNA / MRNA] OF 1-19 (ISOFORM 1)</scope>
</reference>
<reference key="5">
    <citation type="journal article" date="1997" name="Oncogene">
        <title>The cDNA cloning of the transcripts of human PEBP2alphaA/CBFA1 mapped to 6p12.3-p21.1, the locus for cleidocranial dysplasia.</title>
        <authorList>
            <person name="Zhang Y.-W."/>
            <person name="Bae S.-C."/>
            <person name="Takahashi E."/>
            <person name="Ito Y."/>
        </authorList>
    </citation>
    <scope>NUCLEOTIDE SEQUENCE [MRNA] OF 60-521 (ISOFORM 3)</scope>
</reference>
<reference key="6">
    <citation type="journal article" date="2002" name="J. Biol. Chem.">
        <title>Regulation of osteocalcin gene expression by a novel Ku antigen transcription factor complex.</title>
        <authorList>
            <person name="Willis D.M."/>
            <person name="Loewy A.P."/>
            <person name="Charlton-Kachigian N."/>
            <person name="Shao J.-S."/>
            <person name="Ornitz D.M."/>
            <person name="Towler D.A."/>
        </authorList>
    </citation>
    <scope>INTERACTION WITH XRCC5 AND XRCC6</scope>
    <source>
        <tissue>Osteoblast</tissue>
    </source>
</reference>
<reference key="7">
    <citation type="journal article" date="2002" name="Oncogene">
        <title>MOZ and MORF histone acetyltransferases interact with the Runt-domain transcription factor Runx2.</title>
        <authorList>
            <person name="Pelletier N."/>
            <person name="Champagne N."/>
            <person name="Stifani S."/>
            <person name="Yang X.-J."/>
        </authorList>
    </citation>
    <scope>INTERACTION WITH KAT6A AND KAT6B</scope>
    <scope>FUNCTION</scope>
</reference>
<reference key="8">
    <citation type="journal article" date="2006" name="J. Biol. Chem.">
        <title>Cell cycle-dependent phosphorylation of the RUNX2 transcription factor by cdc2 regulates endothelial cell proliferation.</title>
        <authorList>
            <person name="Qiao M."/>
            <person name="Shapiro P."/>
            <person name="Fosbrink M."/>
            <person name="Rus H."/>
            <person name="Kumar R."/>
            <person name="Passaniti A."/>
        </authorList>
    </citation>
    <scope>INTERACTION WITH CCNB1</scope>
    <scope>PHOSPHORYLATION AT SER-451 BY CDK1</scope>
    <scope>MUTAGENESIS OF SER-451</scope>
</reference>
<reference key="9">
    <citation type="journal article" date="2007" name="Nature">
        <title>Foxp3 controls regulatory T-cell function by interacting with AML1/Runx1.</title>
        <authorList>
            <person name="Ono M."/>
            <person name="Yaguchi H."/>
            <person name="Ohkura N."/>
            <person name="Kitabayashi I."/>
            <person name="Nagamura Y."/>
            <person name="Nomura T."/>
            <person name="Miyachi Y."/>
            <person name="Tsukada T."/>
            <person name="Sakaguchi S."/>
        </authorList>
    </citation>
    <scope>INTERACTION WITH FOXP3</scope>
</reference>
<reference key="10">
    <citation type="journal article" date="2008" name="J. Proteome Res.">
        <title>Combining protein-based IMAC, peptide-based IMAC, and MudPIT for efficient phosphoproteomic analysis.</title>
        <authorList>
            <person name="Cantin G.T."/>
            <person name="Yi W."/>
            <person name="Lu B."/>
            <person name="Park S.K."/>
            <person name="Xu T."/>
            <person name="Lee J.-D."/>
            <person name="Yates J.R. III"/>
        </authorList>
    </citation>
    <scope>PHOSPHORYLATION [LARGE SCALE ANALYSIS] AT SER-340 (ISOFORM 3)</scope>
    <scope>IDENTIFICATION BY MASS SPECTROMETRY [LARGE SCALE ANALYSIS]</scope>
    <source>
        <tissue>Cervix carcinoma</tissue>
    </source>
</reference>
<reference key="11">
    <citation type="journal article" date="2013" name="Am. J. Hum. Genet.">
        <title>Metaphyseal dysplasia with maxillary hypoplasia and brachydactyly is caused by a duplication in RUNX2.</title>
        <authorList>
            <consortium name="FORGE Canada Consortium"/>
            <person name="Moffatt P."/>
            <person name="Ben Amor M."/>
            <person name="Glorieux F.H."/>
            <person name="Roschger P."/>
            <person name="Klaushofer K."/>
            <person name="Schwartzentruber J.A."/>
            <person name="Paterson A.D."/>
            <person name="Hu P."/>
            <person name="Marshall C."/>
            <person name="Fahiminiya S."/>
            <person name="Majewski J."/>
            <person name="Beaulieu C.L."/>
            <person name="Boycott K.M."/>
            <person name="Rauch F."/>
        </authorList>
    </citation>
    <scope>INVOLVEMENT IN MDMHB</scope>
</reference>
<reference key="12">
    <citation type="journal article" date="2017" name="Nat. Struct. Mol. Biol.">
        <title>Site-specific mapping of the human SUMO proteome reveals co-modification with phosphorylation.</title>
        <authorList>
            <person name="Hendriks I.A."/>
            <person name="Lyon D."/>
            <person name="Young C."/>
            <person name="Jensen L.J."/>
            <person name="Vertegaal A.C."/>
            <person name="Nielsen M.L."/>
        </authorList>
    </citation>
    <scope>SUMOYLATION [LARGE SCALE ANALYSIS] AT LYS-238</scope>
    <scope>IDENTIFICATION BY MASS SPECTROMETRY [LARGE SCALE ANALYSIS]</scope>
</reference>
<reference key="13">
    <citation type="journal article" date="1997" name="Nat. Genet.">
        <title>Missense mutations abolishing DNA binding of the osteoblast-specific transcription factor OSF2/CBFA1 in cleidocranial dysplasia.</title>
        <authorList>
            <person name="Lee B."/>
            <person name="Thirunavukkarasu K."/>
            <person name="Zhou L."/>
            <person name="Pastore L."/>
            <person name="Baldini A."/>
            <person name="Hecht J."/>
            <person name="Geoffroy V."/>
            <person name="Ducy P."/>
            <person name="Karsenty G."/>
        </authorList>
    </citation>
    <scope>VARIANTS CLCD1 ARG-175 AND ASN-191</scope>
</reference>
<reference key="14">
    <citation type="journal article" date="1999" name="Am. J. Hum. Genet.">
        <title>Mutation analysis of core binding factor A1 in patients with cleidocranial dysplasia.</title>
        <authorList>
            <person name="Quack I."/>
            <person name="Vonderstrass B."/>
            <person name="Stock M."/>
            <person name="Aylsworth A.S."/>
            <person name="Becker A."/>
            <person name="Brueton L."/>
            <person name="Lee P.J."/>
            <person name="Majewski F."/>
            <person name="Mulliken J.B."/>
            <person name="Suri M."/>
            <person name="Zenker M."/>
            <person name="Mundlos S."/>
            <person name="Otto F."/>
        </authorList>
    </citation>
    <scope>VARIANTS CLCD1 ARG-113; ARG-118; CYS-121; ARG-123; ARG-205; GLN-225 AND TRP-225</scope>
    <scope>VARIANT SER-511</scope>
</reference>
<reference key="15">
    <citation type="journal article" date="1999" name="Hum. Mol. Genet.">
        <title>CBFA1 mutation analysis and functional correlation with phenotypic variability in cleidocranial dysplasia.</title>
        <authorList>
            <person name="Zhou G."/>
            <person name="Chen Y."/>
            <person name="Zhou L."/>
            <person name="Thirunavukkarasu K."/>
            <person name="Hecht J."/>
            <person name="Chitayat D."/>
            <person name="Gelb B.D."/>
            <person name="Pirinen S."/>
            <person name="Berry S.A."/>
            <person name="Greenberg C.R."/>
            <person name="Karsenty G."/>
            <person name="Lee B."/>
        </authorList>
    </citation>
    <scope>VARIANTS CLCD1 ASN-133 DEL; GLN-169; ARG-175; GLN-190; ASN-191; CYS-193; PHE-199; ALA-200; ARG-209 AND GLN-225</scope>
</reference>
<reference key="16">
    <citation type="journal article" date="2000" name="Gene">
        <title>PEBP2alphaA/CBFA1 mutations in Japanese cleidocranial dysplasia patients.</title>
        <authorList>
            <person name="Zhang Y.-W."/>
            <person name="Yasui N."/>
            <person name="Kakazu N."/>
            <person name="Abe T."/>
            <person name="Takada K."/>
            <person name="Imai S."/>
            <person name="Sato M."/>
            <person name="Nomura S."/>
            <person name="Ochi T."/>
            <person name="Okuzumi S."/>
            <person name="Nogami H."/>
            <person name="Nagai T."/>
            <person name="Ohashi H."/>
            <person name="Ito Y."/>
        </authorList>
    </citation>
    <scope>VARIANT CLCD1 SER-197</scope>
</reference>
<reference key="17">
    <citation type="journal article" date="2000" name="Hum. Mutat.">
        <title>A novel CBFA1 mutation (R190W) in an Italian family with cleidocranial dysplasia.</title>
        <authorList>
            <person name="Giannotti A."/>
            <person name="Tessa A."/>
            <person name="Patrono C."/>
            <person name="De Florio L."/>
            <person name="Velardo M."/>
            <person name="Dionisi-Vici C."/>
            <person name="Bertini E."/>
            <person name="Santorelli F.M."/>
        </authorList>
    </citation>
    <scope>VARIANT CLCD1 TRP-190</scope>
</reference>
<reference key="18">
    <citation type="journal article" date="2002" name="Am. J. Hum. Genet.">
        <title>Functional analysis of RUNX2 mutations in Japanese patients with cleidocranial dysplasia demonstrates novel genotype-phenotype correlations.</title>
        <authorList>
            <person name="Yoshida T."/>
            <person name="Kanegane H."/>
            <person name="Osato M."/>
            <person name="Yanagida M."/>
            <person name="Miyawaki T."/>
            <person name="Ito Y."/>
            <person name="Shigesada K."/>
        </authorList>
    </citation>
    <scope>VARIANTS CLCD1 TRP-190; SER-197; ASN-218; ILE-220; TRP-225 AND GLN-225</scope>
    <scope>CHARACTERIZATION OF VARIANTS CLCD1 TRP-190; SER-197; ASN-218; ILE-220; TRP-225 AND GLN-225</scope>
</reference>
<reference key="19">
    <citation type="journal article" date="2002" name="Clin. Genet.">
        <title>New mutations in the CBFA1 gene in two Mexican patients with cleidocranial dysplasia.</title>
        <authorList>
            <person name="Machuca-Tzili L."/>
            <person name="Monroy-Jaramillo N."/>
            <person name="Gonzalez-del Angel A."/>
            <person name="Kofman-Alfaro S."/>
        </authorList>
    </citation>
    <scope>VARIANT CLCD1 LEU-53</scope>
</reference>
<reference key="20">
    <citation type="journal article" date="2002" name="Eur. J. Pediatr.">
        <title>Cleidocranial dysplasia with decreased bone density and biochemical findings of hypophosphatasia.</title>
        <authorList>
            <person name="Morava E."/>
            <person name="Karteszi J."/>
            <person name="Weisenbach J."/>
            <person name="Caliebe A."/>
            <person name="Mundlos S."/>
            <person name="Mehes K."/>
        </authorList>
    </citation>
    <scope>VARIANT CLCD1 PRO-169</scope>
</reference>
<reference key="21">
    <citation type="journal article" date="2002" name="Hum. Mutat.">
        <title>Mutations in the RUNX2 gene in patients with cleidocranial dysplasia.</title>
        <authorList>
            <person name="Otto F."/>
            <person name="Kanegane H."/>
            <person name="Mundlos S."/>
        </authorList>
    </citation>
    <scope>VARIANTS CLCD1 GLY-156; PRO-169; TRP-190; LYS-201; TRP-225; GLN-225 AND VAL-362</scope>
</reference>
<reference key="22">
    <citation type="journal article" date="2006" name="J. Cell. Physiol.">
        <title>Four novel RUNX2 mutations including a splice donor site result in the cleidocranial dysplasia phenotype.</title>
        <authorList>
            <person name="Kim H.-J."/>
            <person name="Nam S.-H."/>
            <person name="Kim H.-J."/>
            <person name="Park H.-S."/>
            <person name="Ryoo H.-M."/>
            <person name="Kim S.-Y."/>
            <person name="Cho T.-J."/>
            <person name="Kim S.-G."/>
            <person name="Bae S.-C."/>
            <person name="Kim I.-S."/>
            <person name="Stein J.L."/>
            <person name="van Wijnen A.J."/>
            <person name="Stein G.S."/>
            <person name="Lian J.B."/>
            <person name="Choi J.-Y."/>
        </authorList>
    </citation>
    <scope>VARIANTS CLCD1 GLY-131 AND GLN-225</scope>
</reference>
<reference key="23">
    <citation type="journal article" date="2010" name="Genet. Mol. Res.">
        <title>A novel RUNX2 mutation (T420I) in Chinese patients with cleidocranial dysplasia.</title>
        <authorList>
            <person name="Wang G.X."/>
            <person name="Sun R.P."/>
            <person name="Song F.L."/>
        </authorList>
    </citation>
    <scope>VARIANT CLCD1 ILE-420</scope>
</reference>
<reference key="24">
    <citation type="journal article" date="2010" name="Hum. Mutat.">
        <title>Deletions of the RUNX2 gene are present in about 10% of individuals with cleidocranial dysplasia.</title>
        <authorList>
            <person name="Ott C.E."/>
            <person name="Leschik G."/>
            <person name="Trotier F."/>
            <person name="Brueton L."/>
            <person name="Brunner H.G."/>
            <person name="Brussel W."/>
            <person name="Guillen-Navarro E."/>
            <person name="Haase C."/>
            <person name="Kohlhase J."/>
            <person name="Kotzot D."/>
            <person name="Lane A."/>
            <person name="Lee-Kirsch M.A."/>
            <person name="Morlot S."/>
            <person name="Simon M.E.H."/>
            <person name="Steichen-Gersdorf E."/>
            <person name="Tegay D.H."/>
            <person name="Peters H."/>
            <person name="Mundlos S."/>
            <person name="Klopocki E."/>
        </authorList>
    </citation>
    <scope>VARIANTS CLCD1 ASN-118; SER-131; CYS-131; PRO-136; ASP-156; VAL-175; LYS-175; SER-187; GLN-193; ILE-200; HIS-209; PRO-211; GLN-218; GLU-218; LEU-225; GLY-228; ARG-233; ASN-287 AND ASN-420</scope>
</reference>
<reference key="25">
    <citation type="journal article" date="2010" name="Oral Dis.">
        <title>RUNX2 mutations in cleidocranial dysplasia patients.</title>
        <authorList>
            <person name="Ryoo H.M."/>
            <person name="Kang H.Y."/>
            <person name="Lee S.K."/>
            <person name="Lee K.E."/>
            <person name="Kim J.W."/>
        </authorList>
    </citation>
    <scope>VARIANT CLCD1 TRP-225</scope>
</reference>
<reference key="26">
    <citation type="journal article" date="2014" name="Oral Health Dent. Manag.">
        <title>A case of cleidocranial dysplasia with peculiar dental features: pathogenetic role of the RUNX2 mutation and long term follow-up.</title>
        <authorList>
            <person name="Callea M."/>
            <person name="Bellacchio E."/>
            <person name="Di Stazio M."/>
            <person name="Fattori F."/>
            <person name="Bertini E."/>
            <person name="Yavuz I."/>
            <person name="Clarich G."/>
            <person name="Gunay A."/>
        </authorList>
    </citation>
    <scope>VARIANT CLCD1 CYS-131</scope>
</reference>
<reference key="27">
    <citation type="journal article" date="2018" name="J. Cell. Biochem.">
        <title>A novel RUNX2 mutation in exon 8, G462X, in a patient with Cleidocranial Dysplasia.</title>
        <authorList>
            <person name="Jung Y.J."/>
            <person name="Bae H.S."/>
            <person name="Ryoo H.M."/>
            <person name="Baek S.H."/>
        </authorList>
    </citation>
    <scope>VARIANTS CLCD1 ARG-175; GLN-190; GLN-225 AND 462-GLY--TYR-521 DEL</scope>
    <scope>CHARACTERIZATION OF VARIANT CLCD1 462-GLY--TYR-521 DEL</scope>
    <scope>FUNCTION</scope>
</reference>
<reference key="28">
    <citation type="journal article" date="2017" name="Mutagenesis">
        <title>Functional analysis of novel RUNX2 mutations in cleidocranial dysplasia.</title>
        <authorList>
            <person name="Zeng L."/>
            <person name="Wei J."/>
            <person name="Han D."/>
            <person name="Liu H."/>
            <person name="Liu Y."/>
            <person name="Zhao N."/>
            <person name="Sun S."/>
            <person name="Wang Y."/>
            <person name="Feng H."/>
        </authorList>
    </citation>
    <scope>VARIANTS CLCD1 GLY-193 AND 400-TYR--TYR-521 DEL</scope>
    <scope>CHARACTERIZATION OF VARIANTS CLCD1 GLY-193 AND 400-TYR--TYR-521 DEL</scope>
    <scope>FUNCTION</scope>
    <scope>SUBCELLULAR LOCATION</scope>
</reference>
<reference key="29">
    <citation type="journal article" date="2017" name="PLoS ONE">
        <title>Analysis of novel RUNX2 mutations in Chinese patients with cleidocranial dysplasia.</title>
        <authorList>
            <person name="Zhang X."/>
            <person name="Liu Y."/>
            <person name="Wang X."/>
            <person name="Sun X."/>
            <person name="Zhang C."/>
            <person name="Zheng S."/>
        </authorList>
    </citation>
    <scope>VARIANTS CLCD1 67-GLN--TYR-521 DEL; ARG-113; THR-186 AND TRP-225</scope>
    <scope>CHARACTERIZATION OF VARIANTS CLCD1 67-GLN--TYR-521 DEL; ARG-113; THR-186 AND TRP-225</scope>
    <scope>FUNCTION</scope>
    <scope>SUBCELLULAR LOCATION</scope>
</reference>